<proteinExistence type="inferred from homology"/>
<accession>C6BVJ0</accession>
<comment type="catalytic activity">
    <reaction evidence="1">
        <text>butanoate + ATP = butanoyl phosphate + ADP</text>
        <dbReference type="Rhea" id="RHEA:13585"/>
        <dbReference type="ChEBI" id="CHEBI:17968"/>
        <dbReference type="ChEBI" id="CHEBI:30616"/>
        <dbReference type="ChEBI" id="CHEBI:58079"/>
        <dbReference type="ChEBI" id="CHEBI:456216"/>
        <dbReference type="EC" id="2.7.2.7"/>
    </reaction>
</comment>
<comment type="subcellular location">
    <subcellularLocation>
        <location evidence="1">Cytoplasm</location>
    </subcellularLocation>
</comment>
<comment type="similarity">
    <text evidence="1">Belongs to the acetokinase family.</text>
</comment>
<gene>
    <name evidence="1" type="primary">buk</name>
    <name type="ordered locus">Desal_0133</name>
</gene>
<feature type="chain" id="PRO_1000211956" description="Probable butyrate kinase">
    <location>
        <begin position="1"/>
        <end position="363"/>
    </location>
</feature>
<reference key="1">
    <citation type="submission" date="2009-06" db="EMBL/GenBank/DDBJ databases">
        <title>Complete sequence of Desulfovibrio salexigens DSM 2638.</title>
        <authorList>
            <consortium name="US DOE Joint Genome Institute"/>
            <person name="Lucas S."/>
            <person name="Copeland A."/>
            <person name="Lapidus A."/>
            <person name="Glavina del Rio T."/>
            <person name="Tice H."/>
            <person name="Bruce D."/>
            <person name="Goodwin L."/>
            <person name="Pitluck S."/>
            <person name="Munk A.C."/>
            <person name="Brettin T."/>
            <person name="Detter J.C."/>
            <person name="Han C."/>
            <person name="Tapia R."/>
            <person name="Larimer F."/>
            <person name="Land M."/>
            <person name="Hauser L."/>
            <person name="Kyrpides N."/>
            <person name="Anderson I."/>
            <person name="Wall J.D."/>
            <person name="Arkin A.P."/>
            <person name="Dehal P."/>
            <person name="Chivian D."/>
            <person name="Giles B."/>
            <person name="Hazen T.C."/>
        </authorList>
    </citation>
    <scope>NUCLEOTIDE SEQUENCE [LARGE SCALE GENOMIC DNA]</scope>
    <source>
        <strain>ATCC 14822 / DSM 2638 / NCIMB 8403 / VKM B-1763</strain>
    </source>
</reference>
<organism>
    <name type="scientific">Maridesulfovibrio salexigens (strain ATCC 14822 / DSM 2638 / NCIMB 8403 / VKM B-1763)</name>
    <name type="common">Desulfovibrio salexigens</name>
    <dbReference type="NCBI Taxonomy" id="526222"/>
    <lineage>
        <taxon>Bacteria</taxon>
        <taxon>Pseudomonadati</taxon>
        <taxon>Thermodesulfobacteriota</taxon>
        <taxon>Desulfovibrionia</taxon>
        <taxon>Desulfovibrionales</taxon>
        <taxon>Desulfovibrionaceae</taxon>
        <taxon>Maridesulfovibrio</taxon>
    </lineage>
</organism>
<protein>
    <recommendedName>
        <fullName evidence="1">Probable butyrate kinase</fullName>
        <shortName evidence="1">BK</shortName>
        <ecNumber evidence="1">2.7.2.7</ecNumber>
    </recommendedName>
    <alternativeName>
        <fullName evidence="1">Branched-chain carboxylic acid kinase</fullName>
    </alternativeName>
</protein>
<keyword id="KW-0067">ATP-binding</keyword>
<keyword id="KW-0963">Cytoplasm</keyword>
<keyword id="KW-0418">Kinase</keyword>
<keyword id="KW-0547">Nucleotide-binding</keyword>
<keyword id="KW-1185">Reference proteome</keyword>
<keyword id="KW-0808">Transferase</keyword>
<sequence>MGSRILVINPGSTSTKVAIFNEGKISFDAEVSHPRERIDKFSTVMEQKEFRSAAVMDLIKDELAKGTPDMVVGRGGLLKPIPGGPYSINDAMISDLESGRYGVHPCNLGAILAREFAEFWEVPSMIMDPVVTDEMDPVAKVTGLPEIKRRSVFHALSQRGVARSVAAEMGLEYEQAKFIVGHMGGGVSIGAHRYGKVVDVINALDGEGPFSPERSGTLPILPVLNLVESGQYTFDEMRKVVTSRSGVLGLLGTNDMREVQARMEEGDDEARLVLEALVYNASKYICSFIPALMKDDPQKRPIDAIILTGGVARSKLLVKAVEDVVGFIAPVKVVTGLEEMEVMGRGGLAVLRGEMQPQEYHSD</sequence>
<name>BUK_MARSD</name>
<evidence type="ECO:0000255" key="1">
    <source>
        <dbReference type="HAMAP-Rule" id="MF_00542"/>
    </source>
</evidence>
<dbReference type="EC" id="2.7.2.7" evidence="1"/>
<dbReference type="EMBL" id="CP001649">
    <property type="protein sequence ID" value="ACS78204.1"/>
    <property type="molecule type" value="Genomic_DNA"/>
</dbReference>
<dbReference type="RefSeq" id="WP_012765730.1">
    <property type="nucleotide sequence ID" value="NC_012881.1"/>
</dbReference>
<dbReference type="SMR" id="C6BVJ0"/>
<dbReference type="STRING" id="526222.Desal_0133"/>
<dbReference type="KEGG" id="dsa:Desal_0133"/>
<dbReference type="eggNOG" id="COG3426">
    <property type="taxonomic scope" value="Bacteria"/>
</dbReference>
<dbReference type="HOGENOM" id="CLU_048716_0_0_7"/>
<dbReference type="OrthoDB" id="9771859at2"/>
<dbReference type="Proteomes" id="UP000002601">
    <property type="component" value="Chromosome"/>
</dbReference>
<dbReference type="GO" id="GO:0005737">
    <property type="term" value="C:cytoplasm"/>
    <property type="evidence" value="ECO:0007669"/>
    <property type="project" value="UniProtKB-SubCell"/>
</dbReference>
<dbReference type="GO" id="GO:0008776">
    <property type="term" value="F:acetate kinase activity"/>
    <property type="evidence" value="ECO:0007669"/>
    <property type="project" value="TreeGrafter"/>
</dbReference>
<dbReference type="GO" id="GO:0005524">
    <property type="term" value="F:ATP binding"/>
    <property type="evidence" value="ECO:0007669"/>
    <property type="project" value="UniProtKB-KW"/>
</dbReference>
<dbReference type="GO" id="GO:0047761">
    <property type="term" value="F:butyrate kinase activity"/>
    <property type="evidence" value="ECO:0007669"/>
    <property type="project" value="UniProtKB-UniRule"/>
</dbReference>
<dbReference type="GO" id="GO:0006083">
    <property type="term" value="P:acetate metabolic process"/>
    <property type="evidence" value="ECO:0007669"/>
    <property type="project" value="TreeGrafter"/>
</dbReference>
<dbReference type="CDD" id="cd24011">
    <property type="entry name" value="ASKHA_NBD_BK"/>
    <property type="match status" value="1"/>
</dbReference>
<dbReference type="Gene3D" id="3.30.420.40">
    <property type="match status" value="2"/>
</dbReference>
<dbReference type="HAMAP" id="MF_00542">
    <property type="entry name" value="Butyrate_kinase"/>
    <property type="match status" value="1"/>
</dbReference>
<dbReference type="InterPro" id="IPR000890">
    <property type="entry name" value="Aliphatic_acid_kin_short-chain"/>
</dbReference>
<dbReference type="InterPro" id="IPR023865">
    <property type="entry name" value="Aliphatic_acid_kinase_CS"/>
</dbReference>
<dbReference type="InterPro" id="IPR043129">
    <property type="entry name" value="ATPase_NBD"/>
</dbReference>
<dbReference type="InterPro" id="IPR011245">
    <property type="entry name" value="Butyrate_kin"/>
</dbReference>
<dbReference type="NCBIfam" id="TIGR02707">
    <property type="entry name" value="butyr_kinase"/>
    <property type="match status" value="1"/>
</dbReference>
<dbReference type="NCBIfam" id="NF002834">
    <property type="entry name" value="PRK03011.1-5"/>
    <property type="match status" value="1"/>
</dbReference>
<dbReference type="PANTHER" id="PTHR21060">
    <property type="entry name" value="ACETATE KINASE"/>
    <property type="match status" value="1"/>
</dbReference>
<dbReference type="PANTHER" id="PTHR21060:SF3">
    <property type="entry name" value="BUTYRATE KINASE 2-RELATED"/>
    <property type="match status" value="1"/>
</dbReference>
<dbReference type="Pfam" id="PF00871">
    <property type="entry name" value="Acetate_kinase"/>
    <property type="match status" value="1"/>
</dbReference>
<dbReference type="PIRSF" id="PIRSF036458">
    <property type="entry name" value="Butyrate_kin"/>
    <property type="match status" value="1"/>
</dbReference>
<dbReference type="PRINTS" id="PR00471">
    <property type="entry name" value="ACETATEKNASE"/>
</dbReference>
<dbReference type="SUPFAM" id="SSF53067">
    <property type="entry name" value="Actin-like ATPase domain"/>
    <property type="match status" value="2"/>
</dbReference>
<dbReference type="PROSITE" id="PS01075">
    <property type="entry name" value="ACETATE_KINASE_1"/>
    <property type="match status" value="1"/>
</dbReference>
<dbReference type="PROSITE" id="PS01076">
    <property type="entry name" value="ACETATE_KINASE_2"/>
    <property type="match status" value="1"/>
</dbReference>